<comment type="function">
    <text evidence="1">Catalyzes the ATP-dependent amination of UTP to CTP with either L-glutamine or ammonia as the source of nitrogen. Regulates intracellular CTP levels through interactions with the four ribonucleotide triphosphates.</text>
</comment>
<comment type="catalytic activity">
    <reaction evidence="1">
        <text>UTP + L-glutamine + ATP + H2O = CTP + L-glutamate + ADP + phosphate + 2 H(+)</text>
        <dbReference type="Rhea" id="RHEA:26426"/>
        <dbReference type="ChEBI" id="CHEBI:15377"/>
        <dbReference type="ChEBI" id="CHEBI:15378"/>
        <dbReference type="ChEBI" id="CHEBI:29985"/>
        <dbReference type="ChEBI" id="CHEBI:30616"/>
        <dbReference type="ChEBI" id="CHEBI:37563"/>
        <dbReference type="ChEBI" id="CHEBI:43474"/>
        <dbReference type="ChEBI" id="CHEBI:46398"/>
        <dbReference type="ChEBI" id="CHEBI:58359"/>
        <dbReference type="ChEBI" id="CHEBI:456216"/>
        <dbReference type="EC" id="6.3.4.2"/>
    </reaction>
</comment>
<comment type="catalytic activity">
    <reaction evidence="1">
        <text>L-glutamine + H2O = L-glutamate + NH4(+)</text>
        <dbReference type="Rhea" id="RHEA:15889"/>
        <dbReference type="ChEBI" id="CHEBI:15377"/>
        <dbReference type="ChEBI" id="CHEBI:28938"/>
        <dbReference type="ChEBI" id="CHEBI:29985"/>
        <dbReference type="ChEBI" id="CHEBI:58359"/>
    </reaction>
</comment>
<comment type="catalytic activity">
    <reaction evidence="1">
        <text>UTP + NH4(+) + ATP = CTP + ADP + phosphate + 2 H(+)</text>
        <dbReference type="Rhea" id="RHEA:16597"/>
        <dbReference type="ChEBI" id="CHEBI:15378"/>
        <dbReference type="ChEBI" id="CHEBI:28938"/>
        <dbReference type="ChEBI" id="CHEBI:30616"/>
        <dbReference type="ChEBI" id="CHEBI:37563"/>
        <dbReference type="ChEBI" id="CHEBI:43474"/>
        <dbReference type="ChEBI" id="CHEBI:46398"/>
        <dbReference type="ChEBI" id="CHEBI:456216"/>
    </reaction>
</comment>
<comment type="activity regulation">
    <text evidence="1">Allosterically activated by GTP, when glutamine is the substrate; GTP has no effect on the reaction when ammonia is the substrate. The allosteric effector GTP functions by stabilizing the protein conformation that binds the tetrahedral intermediate(s) formed during glutamine hydrolysis. Inhibited by the product CTP, via allosteric rather than competitive inhibition.</text>
</comment>
<comment type="pathway">
    <text evidence="1">Pyrimidine metabolism; CTP biosynthesis via de novo pathway; CTP from UDP: step 2/2.</text>
</comment>
<comment type="subunit">
    <text evidence="1">Homotetramer.</text>
</comment>
<comment type="miscellaneous">
    <text evidence="1">CTPSs have evolved a hybrid strategy for distinguishing between UTP and CTP. The overlapping regions of the product feedback inhibitory and substrate sites recognize a common feature in both compounds, the triphosphate moiety. To differentiate isosteric substrate and product pyrimidine rings, an additional pocket far from the expected kinase/ligase catalytic site, specifically recognizes the cytosine and ribose portions of the product inhibitor.</text>
</comment>
<comment type="similarity">
    <text evidence="1">Belongs to the CTP synthase family.</text>
</comment>
<reference key="1">
    <citation type="journal article" date="2004" name="Nat. Biotechnol.">
        <title>The genome sequence of the extreme thermophile Thermus thermophilus.</title>
        <authorList>
            <person name="Henne A."/>
            <person name="Brueggemann H."/>
            <person name="Raasch C."/>
            <person name="Wiezer A."/>
            <person name="Hartsch T."/>
            <person name="Liesegang H."/>
            <person name="Johann A."/>
            <person name="Lienard T."/>
            <person name="Gohl O."/>
            <person name="Martinez-Arias R."/>
            <person name="Jacobi C."/>
            <person name="Starkuviene V."/>
            <person name="Schlenczeck S."/>
            <person name="Dencker S."/>
            <person name="Huber R."/>
            <person name="Klenk H.-P."/>
            <person name="Kramer W."/>
            <person name="Merkl R."/>
            <person name="Gottschalk G."/>
            <person name="Fritz H.-J."/>
        </authorList>
    </citation>
    <scope>NUCLEOTIDE SEQUENCE [LARGE SCALE GENOMIC DNA]</scope>
    <source>
        <strain>ATCC BAA-163 / DSM 7039 / HB27</strain>
    </source>
</reference>
<name>PYRG_THET2</name>
<dbReference type="EC" id="6.3.4.2" evidence="1"/>
<dbReference type="EMBL" id="AE017221">
    <property type="protein sequence ID" value="AAS81444.1"/>
    <property type="molecule type" value="Genomic_DNA"/>
</dbReference>
<dbReference type="RefSeq" id="WP_011173516.1">
    <property type="nucleotide sequence ID" value="NC_005835.1"/>
</dbReference>
<dbReference type="SMR" id="Q72IN0"/>
<dbReference type="KEGG" id="tth:TT_C1102"/>
<dbReference type="eggNOG" id="COG0504">
    <property type="taxonomic scope" value="Bacteria"/>
</dbReference>
<dbReference type="HOGENOM" id="CLU_011675_5_0_0"/>
<dbReference type="OrthoDB" id="9801107at2"/>
<dbReference type="UniPathway" id="UPA00159">
    <property type="reaction ID" value="UER00277"/>
</dbReference>
<dbReference type="Proteomes" id="UP000000592">
    <property type="component" value="Chromosome"/>
</dbReference>
<dbReference type="GO" id="GO:0005829">
    <property type="term" value="C:cytosol"/>
    <property type="evidence" value="ECO:0007669"/>
    <property type="project" value="TreeGrafter"/>
</dbReference>
<dbReference type="GO" id="GO:0005524">
    <property type="term" value="F:ATP binding"/>
    <property type="evidence" value="ECO:0007669"/>
    <property type="project" value="UniProtKB-KW"/>
</dbReference>
<dbReference type="GO" id="GO:0003883">
    <property type="term" value="F:CTP synthase activity"/>
    <property type="evidence" value="ECO:0007669"/>
    <property type="project" value="UniProtKB-UniRule"/>
</dbReference>
<dbReference type="GO" id="GO:0004359">
    <property type="term" value="F:glutaminase activity"/>
    <property type="evidence" value="ECO:0007669"/>
    <property type="project" value="RHEA"/>
</dbReference>
<dbReference type="GO" id="GO:0042802">
    <property type="term" value="F:identical protein binding"/>
    <property type="evidence" value="ECO:0007669"/>
    <property type="project" value="TreeGrafter"/>
</dbReference>
<dbReference type="GO" id="GO:0046872">
    <property type="term" value="F:metal ion binding"/>
    <property type="evidence" value="ECO:0007669"/>
    <property type="project" value="UniProtKB-KW"/>
</dbReference>
<dbReference type="GO" id="GO:0044210">
    <property type="term" value="P:'de novo' CTP biosynthetic process"/>
    <property type="evidence" value="ECO:0007669"/>
    <property type="project" value="UniProtKB-UniRule"/>
</dbReference>
<dbReference type="GO" id="GO:0019856">
    <property type="term" value="P:pyrimidine nucleobase biosynthetic process"/>
    <property type="evidence" value="ECO:0007669"/>
    <property type="project" value="TreeGrafter"/>
</dbReference>
<dbReference type="CDD" id="cd03113">
    <property type="entry name" value="CTPS_N"/>
    <property type="match status" value="1"/>
</dbReference>
<dbReference type="CDD" id="cd01746">
    <property type="entry name" value="GATase1_CTP_Synthase"/>
    <property type="match status" value="1"/>
</dbReference>
<dbReference type="FunFam" id="3.40.50.300:FF:000009">
    <property type="entry name" value="CTP synthase"/>
    <property type="match status" value="1"/>
</dbReference>
<dbReference type="FunFam" id="3.40.50.880:FF:000002">
    <property type="entry name" value="CTP synthase"/>
    <property type="match status" value="1"/>
</dbReference>
<dbReference type="Gene3D" id="3.40.50.880">
    <property type="match status" value="1"/>
</dbReference>
<dbReference type="Gene3D" id="3.40.50.300">
    <property type="entry name" value="P-loop containing nucleotide triphosphate hydrolases"/>
    <property type="match status" value="1"/>
</dbReference>
<dbReference type="HAMAP" id="MF_01227">
    <property type="entry name" value="PyrG"/>
    <property type="match status" value="1"/>
</dbReference>
<dbReference type="InterPro" id="IPR029062">
    <property type="entry name" value="Class_I_gatase-like"/>
</dbReference>
<dbReference type="InterPro" id="IPR004468">
    <property type="entry name" value="CTP_synthase"/>
</dbReference>
<dbReference type="InterPro" id="IPR017456">
    <property type="entry name" value="CTP_synthase_N"/>
</dbReference>
<dbReference type="InterPro" id="IPR017926">
    <property type="entry name" value="GATASE"/>
</dbReference>
<dbReference type="InterPro" id="IPR033828">
    <property type="entry name" value="GATase1_CTP_Synthase"/>
</dbReference>
<dbReference type="InterPro" id="IPR027417">
    <property type="entry name" value="P-loop_NTPase"/>
</dbReference>
<dbReference type="NCBIfam" id="NF003792">
    <property type="entry name" value="PRK05380.1"/>
    <property type="match status" value="1"/>
</dbReference>
<dbReference type="NCBIfam" id="TIGR00337">
    <property type="entry name" value="PyrG"/>
    <property type="match status" value="1"/>
</dbReference>
<dbReference type="PANTHER" id="PTHR11550">
    <property type="entry name" value="CTP SYNTHASE"/>
    <property type="match status" value="1"/>
</dbReference>
<dbReference type="PANTHER" id="PTHR11550:SF0">
    <property type="entry name" value="CTP SYNTHASE-RELATED"/>
    <property type="match status" value="1"/>
</dbReference>
<dbReference type="Pfam" id="PF06418">
    <property type="entry name" value="CTP_synth_N"/>
    <property type="match status" value="1"/>
</dbReference>
<dbReference type="Pfam" id="PF00117">
    <property type="entry name" value="GATase"/>
    <property type="match status" value="1"/>
</dbReference>
<dbReference type="SUPFAM" id="SSF52317">
    <property type="entry name" value="Class I glutamine amidotransferase-like"/>
    <property type="match status" value="1"/>
</dbReference>
<dbReference type="SUPFAM" id="SSF52540">
    <property type="entry name" value="P-loop containing nucleoside triphosphate hydrolases"/>
    <property type="match status" value="1"/>
</dbReference>
<dbReference type="PROSITE" id="PS51273">
    <property type="entry name" value="GATASE_TYPE_1"/>
    <property type="match status" value="1"/>
</dbReference>
<accession>Q72IN0</accession>
<feature type="chain" id="PRO_0000266250" description="CTP synthase">
    <location>
        <begin position="1"/>
        <end position="550"/>
    </location>
</feature>
<feature type="domain" description="Glutamine amidotransferase type-1" evidence="1">
    <location>
        <begin position="302"/>
        <end position="549"/>
    </location>
</feature>
<feature type="region of interest" description="Amidoligase domain" evidence="1">
    <location>
        <begin position="1"/>
        <end position="277"/>
    </location>
</feature>
<feature type="active site" description="Nucleophile; for glutamine hydrolysis" evidence="1">
    <location>
        <position position="391"/>
    </location>
</feature>
<feature type="active site" evidence="1">
    <location>
        <position position="522"/>
    </location>
</feature>
<feature type="active site" evidence="1">
    <location>
        <position position="524"/>
    </location>
</feature>
<feature type="binding site" evidence="1">
    <location>
        <position position="23"/>
    </location>
    <ligand>
        <name>CTP</name>
        <dbReference type="ChEBI" id="CHEBI:37563"/>
        <note>allosteric inhibitor</note>
    </ligand>
</feature>
<feature type="binding site" evidence="1">
    <location>
        <position position="23"/>
    </location>
    <ligand>
        <name>UTP</name>
        <dbReference type="ChEBI" id="CHEBI:46398"/>
    </ligand>
</feature>
<feature type="binding site" evidence="1">
    <location>
        <begin position="24"/>
        <end position="29"/>
    </location>
    <ligand>
        <name>ATP</name>
        <dbReference type="ChEBI" id="CHEBI:30616"/>
    </ligand>
</feature>
<feature type="binding site" evidence="1">
    <location>
        <position position="64"/>
    </location>
    <ligand>
        <name>L-glutamine</name>
        <dbReference type="ChEBI" id="CHEBI:58359"/>
    </ligand>
</feature>
<feature type="binding site" evidence="1">
    <location>
        <position position="81"/>
    </location>
    <ligand>
        <name>ATP</name>
        <dbReference type="ChEBI" id="CHEBI:30616"/>
    </ligand>
</feature>
<feature type="binding site" evidence="1">
    <location>
        <position position="81"/>
    </location>
    <ligand>
        <name>Mg(2+)</name>
        <dbReference type="ChEBI" id="CHEBI:18420"/>
    </ligand>
</feature>
<feature type="binding site" evidence="1">
    <location>
        <position position="151"/>
    </location>
    <ligand>
        <name>Mg(2+)</name>
        <dbReference type="ChEBI" id="CHEBI:18420"/>
    </ligand>
</feature>
<feature type="binding site" evidence="1">
    <location>
        <begin position="158"/>
        <end position="160"/>
    </location>
    <ligand>
        <name>CTP</name>
        <dbReference type="ChEBI" id="CHEBI:37563"/>
        <note>allosteric inhibitor</note>
    </ligand>
</feature>
<feature type="binding site" evidence="1">
    <location>
        <begin position="198"/>
        <end position="203"/>
    </location>
    <ligand>
        <name>CTP</name>
        <dbReference type="ChEBI" id="CHEBI:37563"/>
        <note>allosteric inhibitor</note>
    </ligand>
</feature>
<feature type="binding site" evidence="1">
    <location>
        <begin position="198"/>
        <end position="203"/>
    </location>
    <ligand>
        <name>UTP</name>
        <dbReference type="ChEBI" id="CHEBI:46398"/>
    </ligand>
</feature>
<feature type="binding site" evidence="1">
    <location>
        <position position="234"/>
    </location>
    <ligand>
        <name>CTP</name>
        <dbReference type="ChEBI" id="CHEBI:37563"/>
        <note>allosteric inhibitor</note>
    </ligand>
</feature>
<feature type="binding site" evidence="1">
    <location>
        <position position="234"/>
    </location>
    <ligand>
        <name>UTP</name>
        <dbReference type="ChEBI" id="CHEBI:46398"/>
    </ligand>
</feature>
<feature type="binding site" evidence="1">
    <location>
        <position position="364"/>
    </location>
    <ligand>
        <name>L-glutamine</name>
        <dbReference type="ChEBI" id="CHEBI:58359"/>
    </ligand>
</feature>
<feature type="binding site" evidence="1">
    <location>
        <begin position="392"/>
        <end position="395"/>
    </location>
    <ligand>
        <name>L-glutamine</name>
        <dbReference type="ChEBI" id="CHEBI:58359"/>
    </ligand>
</feature>
<feature type="binding site" evidence="1">
    <location>
        <position position="415"/>
    </location>
    <ligand>
        <name>L-glutamine</name>
        <dbReference type="ChEBI" id="CHEBI:58359"/>
    </ligand>
</feature>
<feature type="binding site" evidence="1">
    <location>
        <position position="472"/>
    </location>
    <ligand>
        <name>L-glutamine</name>
        <dbReference type="ChEBI" id="CHEBI:58359"/>
    </ligand>
</feature>
<gene>
    <name evidence="1" type="primary">pyrG</name>
    <name type="ordered locus">TT_C1102</name>
</gene>
<sequence>MNGSADAGPRPRKYVFITGGVVSSLGKGILTSSLGALLRARGYRVTAIKIDPYVNVDAGTMRPYEHGEVFVTADGAETDLDIGHYERFLDMDLSRGNNLTTGQVYLSVIQKERRGEYLSQTVQVIPHITDEIKERIRKVAEEQKAEIVVVEVGGTVGDIESLPFLEAIRQFRFDEGEGNTLYLHLTLVPYLETSEEFKTKPTQHSVATLRGVGIQPDILVLRSARPVPEEVRRKVALFTNVRPGHVFSSPTVEHLYEVPLLLEEQGLGRAVERALGLEAVIPNLAFWQEAVRVLKHPERTVKIAIAGKYVKMPDAYLSLLEALRHAGIKNRARVEVKWVDAESLEAADLDEAFRDVSGILVPGGFGVRGIEGKVRAAQYARERKIPYLGICLGLQIAVIEFARNVAGLKGANSTEFDPYTPHPVIDLMPEQLEVEGLGGTMRLGDWPMRIKPGTLLHRLYGKEEVLERHRHRYEVNPLYVDGLERAGLVVSATTPGMRGRGAGLVEAIELKDHPFFLGLQSHPEFKSRPMRPSPPFVGFVEAALAYQERA</sequence>
<protein>
    <recommendedName>
        <fullName evidence="1">CTP synthase</fullName>
        <ecNumber evidence="1">6.3.4.2</ecNumber>
    </recommendedName>
    <alternativeName>
        <fullName evidence="1">Cytidine 5'-triphosphate synthase</fullName>
    </alternativeName>
    <alternativeName>
        <fullName evidence="1">Cytidine triphosphate synthetase</fullName>
        <shortName evidence="1">CTP synthetase</shortName>
        <shortName evidence="1">CTPS</shortName>
    </alternativeName>
    <alternativeName>
        <fullName evidence="1">UTP--ammonia ligase</fullName>
    </alternativeName>
</protein>
<evidence type="ECO:0000255" key="1">
    <source>
        <dbReference type="HAMAP-Rule" id="MF_01227"/>
    </source>
</evidence>
<organism>
    <name type="scientific">Thermus thermophilus (strain ATCC BAA-163 / DSM 7039 / HB27)</name>
    <dbReference type="NCBI Taxonomy" id="262724"/>
    <lineage>
        <taxon>Bacteria</taxon>
        <taxon>Thermotogati</taxon>
        <taxon>Deinococcota</taxon>
        <taxon>Deinococci</taxon>
        <taxon>Thermales</taxon>
        <taxon>Thermaceae</taxon>
        <taxon>Thermus</taxon>
    </lineage>
</organism>
<proteinExistence type="inferred from homology"/>
<keyword id="KW-0067">ATP-binding</keyword>
<keyword id="KW-0315">Glutamine amidotransferase</keyword>
<keyword id="KW-0436">Ligase</keyword>
<keyword id="KW-0460">Magnesium</keyword>
<keyword id="KW-0479">Metal-binding</keyword>
<keyword id="KW-0547">Nucleotide-binding</keyword>
<keyword id="KW-0665">Pyrimidine biosynthesis</keyword>